<reference key="1">
    <citation type="journal article" date="2005" name="Genome Res.">
        <title>Comparative and functional genomic analyses of the pathogenicity of phytopathogen Xanthomonas campestris pv. campestris.</title>
        <authorList>
            <person name="Qian W."/>
            <person name="Jia Y."/>
            <person name="Ren S.-X."/>
            <person name="He Y.-Q."/>
            <person name="Feng J.-X."/>
            <person name="Lu L.-F."/>
            <person name="Sun Q."/>
            <person name="Ying G."/>
            <person name="Tang D.-J."/>
            <person name="Tang H."/>
            <person name="Wu W."/>
            <person name="Hao P."/>
            <person name="Wang L."/>
            <person name="Jiang B.-L."/>
            <person name="Zeng S."/>
            <person name="Gu W.-Y."/>
            <person name="Lu G."/>
            <person name="Rong L."/>
            <person name="Tian Y."/>
            <person name="Yao Z."/>
            <person name="Fu G."/>
            <person name="Chen B."/>
            <person name="Fang R."/>
            <person name="Qiang B."/>
            <person name="Chen Z."/>
            <person name="Zhao G.-P."/>
            <person name="Tang J.-L."/>
            <person name="He C."/>
        </authorList>
    </citation>
    <scope>NUCLEOTIDE SEQUENCE [LARGE SCALE GENOMIC DNA]</scope>
    <source>
        <strain>8004</strain>
    </source>
</reference>
<proteinExistence type="inferred from homology"/>
<sequence length="309" mass="32460">MAPSHWRLILNGKSTDNEDLREAVGVLRKRGIQLDVRVTWEEGDAERYVAEAIADGVQTVVAAGGDGTLSEVAAALAHHQDDAATLPSLGLVPLGTANDFATAAMIPLEPLGALGLIAERAAEPIDLLRIDADHGPHWCANVASGGFGTQVTVETDAGLKKMLGGLAYLITGMSRLGRIDPISAHFTGPDFSWEGEFIALGLGNGRQAGGGQALCPEALIDDGLLDVTIVPALNGEVAATLGTLVTGGKQAALERVAVRTRLPWLEIASVQPLTLNLDGEPETSRHFRVECVAARLRMHLPIDCPLRSA</sequence>
<comment type="function">
    <text evidence="1">Probably phosphorylates lipids; the in vivo substrate is unknown.</text>
</comment>
<comment type="cofactor">
    <cofactor evidence="1">
        <name>Mg(2+)</name>
        <dbReference type="ChEBI" id="CHEBI:18420"/>
    </cofactor>
    <cofactor evidence="1">
        <name>Ca(2+)</name>
        <dbReference type="ChEBI" id="CHEBI:29108"/>
    </cofactor>
    <text evidence="1">Binds 1 Mg(2+) ion per subunit. Ca(2+) may be able to substitute.</text>
</comment>
<comment type="subcellular location">
    <subcellularLocation>
        <location evidence="1">Cytoplasm</location>
    </subcellularLocation>
</comment>
<comment type="similarity">
    <text evidence="1">Belongs to the diacylglycerol/lipid kinase family. YegS lipid kinase subfamily.</text>
</comment>
<accession>Q4UZH0</accession>
<feature type="chain" id="PRO_0000292166" description="Probable lipid kinase YegS-like">
    <location>
        <begin position="1"/>
        <end position="309"/>
    </location>
</feature>
<feature type="domain" description="DAGKc" evidence="1">
    <location>
        <begin position="1"/>
        <end position="134"/>
    </location>
</feature>
<feature type="active site" description="Proton acceptor" evidence="1">
    <location>
        <position position="280"/>
    </location>
</feature>
<feature type="binding site" evidence="1">
    <location>
        <position position="39"/>
    </location>
    <ligand>
        <name>ATP</name>
        <dbReference type="ChEBI" id="CHEBI:30616"/>
    </ligand>
</feature>
<feature type="binding site" evidence="1">
    <location>
        <begin position="65"/>
        <end position="71"/>
    </location>
    <ligand>
        <name>ATP</name>
        <dbReference type="ChEBI" id="CHEBI:30616"/>
    </ligand>
</feature>
<feature type="binding site" evidence="1">
    <location>
        <position position="96"/>
    </location>
    <ligand>
        <name>ATP</name>
        <dbReference type="ChEBI" id="CHEBI:30616"/>
    </ligand>
</feature>
<feature type="binding site" evidence="1">
    <location>
        <position position="219"/>
    </location>
    <ligand>
        <name>Mg(2+)</name>
        <dbReference type="ChEBI" id="CHEBI:18420"/>
    </ligand>
</feature>
<feature type="binding site" evidence="1">
    <location>
        <position position="222"/>
    </location>
    <ligand>
        <name>Mg(2+)</name>
        <dbReference type="ChEBI" id="CHEBI:18420"/>
    </ligand>
</feature>
<feature type="binding site" evidence="1">
    <location>
        <position position="224"/>
    </location>
    <ligand>
        <name>Mg(2+)</name>
        <dbReference type="ChEBI" id="CHEBI:18420"/>
    </ligand>
</feature>
<evidence type="ECO:0000255" key="1">
    <source>
        <dbReference type="HAMAP-Rule" id="MF_01377"/>
    </source>
</evidence>
<organism>
    <name type="scientific">Xanthomonas campestris pv. campestris (strain 8004)</name>
    <dbReference type="NCBI Taxonomy" id="314565"/>
    <lineage>
        <taxon>Bacteria</taxon>
        <taxon>Pseudomonadati</taxon>
        <taxon>Pseudomonadota</taxon>
        <taxon>Gammaproteobacteria</taxon>
        <taxon>Lysobacterales</taxon>
        <taxon>Lysobacteraceae</taxon>
        <taxon>Xanthomonas</taxon>
    </lineage>
</organism>
<gene>
    <name type="ordered locus">XC_0472</name>
</gene>
<protein>
    <recommendedName>
        <fullName evidence="1">Probable lipid kinase YegS-like</fullName>
        <ecNumber evidence="1">2.7.1.-</ecNumber>
    </recommendedName>
</protein>
<keyword id="KW-0067">ATP-binding</keyword>
<keyword id="KW-0963">Cytoplasm</keyword>
<keyword id="KW-0418">Kinase</keyword>
<keyword id="KW-0444">Lipid biosynthesis</keyword>
<keyword id="KW-0443">Lipid metabolism</keyword>
<keyword id="KW-0460">Magnesium</keyword>
<keyword id="KW-0479">Metal-binding</keyword>
<keyword id="KW-0547">Nucleotide-binding</keyword>
<keyword id="KW-0594">Phospholipid biosynthesis</keyword>
<keyword id="KW-1208">Phospholipid metabolism</keyword>
<keyword id="KW-0808">Transferase</keyword>
<dbReference type="EC" id="2.7.1.-" evidence="1"/>
<dbReference type="EMBL" id="CP000050">
    <property type="protein sequence ID" value="AAY47553.1"/>
    <property type="molecule type" value="Genomic_DNA"/>
</dbReference>
<dbReference type="SMR" id="Q4UZH0"/>
<dbReference type="KEGG" id="xcb:XC_0472"/>
<dbReference type="HOGENOM" id="CLU_045532_1_1_6"/>
<dbReference type="Proteomes" id="UP000000420">
    <property type="component" value="Chromosome"/>
</dbReference>
<dbReference type="GO" id="GO:0005737">
    <property type="term" value="C:cytoplasm"/>
    <property type="evidence" value="ECO:0007669"/>
    <property type="project" value="UniProtKB-SubCell"/>
</dbReference>
<dbReference type="GO" id="GO:0005886">
    <property type="term" value="C:plasma membrane"/>
    <property type="evidence" value="ECO:0007669"/>
    <property type="project" value="TreeGrafter"/>
</dbReference>
<dbReference type="GO" id="GO:0005524">
    <property type="term" value="F:ATP binding"/>
    <property type="evidence" value="ECO:0007669"/>
    <property type="project" value="UniProtKB-UniRule"/>
</dbReference>
<dbReference type="GO" id="GO:0001727">
    <property type="term" value="F:lipid kinase activity"/>
    <property type="evidence" value="ECO:0007669"/>
    <property type="project" value="UniProtKB-UniRule"/>
</dbReference>
<dbReference type="GO" id="GO:0000287">
    <property type="term" value="F:magnesium ion binding"/>
    <property type="evidence" value="ECO:0007669"/>
    <property type="project" value="UniProtKB-UniRule"/>
</dbReference>
<dbReference type="GO" id="GO:0008654">
    <property type="term" value="P:phospholipid biosynthetic process"/>
    <property type="evidence" value="ECO:0007669"/>
    <property type="project" value="UniProtKB-UniRule"/>
</dbReference>
<dbReference type="Gene3D" id="2.60.200.40">
    <property type="match status" value="1"/>
</dbReference>
<dbReference type="Gene3D" id="3.40.50.10330">
    <property type="entry name" value="Probable inorganic polyphosphate/atp-NAD kinase, domain 1"/>
    <property type="match status" value="1"/>
</dbReference>
<dbReference type="HAMAP" id="MF_01377">
    <property type="entry name" value="YegS"/>
    <property type="match status" value="1"/>
</dbReference>
<dbReference type="InterPro" id="IPR017438">
    <property type="entry name" value="ATP-NAD_kinase_N"/>
</dbReference>
<dbReference type="InterPro" id="IPR005218">
    <property type="entry name" value="Diacylglycerol/lipid_kinase"/>
</dbReference>
<dbReference type="InterPro" id="IPR001206">
    <property type="entry name" value="Diacylglycerol_kinase_cat_dom"/>
</dbReference>
<dbReference type="InterPro" id="IPR022433">
    <property type="entry name" value="Lip_kinase_YegS"/>
</dbReference>
<dbReference type="InterPro" id="IPR050187">
    <property type="entry name" value="Lipid_Phosphate_FormReg"/>
</dbReference>
<dbReference type="InterPro" id="IPR016064">
    <property type="entry name" value="NAD/diacylglycerol_kinase_sf"/>
</dbReference>
<dbReference type="InterPro" id="IPR045540">
    <property type="entry name" value="YegS/DAGK_C"/>
</dbReference>
<dbReference type="NCBIfam" id="TIGR03702">
    <property type="entry name" value="lip_kinase_YegS"/>
    <property type="match status" value="1"/>
</dbReference>
<dbReference type="NCBIfam" id="NF009602">
    <property type="entry name" value="PRK13054.1"/>
    <property type="match status" value="1"/>
</dbReference>
<dbReference type="NCBIfam" id="TIGR00147">
    <property type="entry name" value="YegS/Rv2252/BmrU family lipid kinase"/>
    <property type="match status" value="1"/>
</dbReference>
<dbReference type="PANTHER" id="PTHR12358:SF106">
    <property type="entry name" value="LIPID KINASE YEGS"/>
    <property type="match status" value="1"/>
</dbReference>
<dbReference type="PANTHER" id="PTHR12358">
    <property type="entry name" value="SPHINGOSINE KINASE"/>
    <property type="match status" value="1"/>
</dbReference>
<dbReference type="Pfam" id="PF00781">
    <property type="entry name" value="DAGK_cat"/>
    <property type="match status" value="1"/>
</dbReference>
<dbReference type="Pfam" id="PF19279">
    <property type="entry name" value="YegS_C"/>
    <property type="match status" value="1"/>
</dbReference>
<dbReference type="SMART" id="SM00046">
    <property type="entry name" value="DAGKc"/>
    <property type="match status" value="1"/>
</dbReference>
<dbReference type="SUPFAM" id="SSF111331">
    <property type="entry name" value="NAD kinase/diacylglycerol kinase-like"/>
    <property type="match status" value="1"/>
</dbReference>
<dbReference type="PROSITE" id="PS50146">
    <property type="entry name" value="DAGK"/>
    <property type="match status" value="1"/>
</dbReference>
<name>YEGS_XANC8</name>